<gene>
    <name type="primary">Kdelr2</name>
</gene>
<dbReference type="EMBL" id="AJ278133">
    <property type="protein sequence ID" value="CAC34585.1"/>
    <property type="molecule type" value="mRNA"/>
</dbReference>
<dbReference type="EMBL" id="AK003515">
    <property type="protein sequence ID" value="BAB22829.1"/>
    <property type="molecule type" value="mRNA"/>
</dbReference>
<dbReference type="EMBL" id="AK007403">
    <property type="protein sequence ID" value="BAB25016.1"/>
    <property type="molecule type" value="mRNA"/>
</dbReference>
<dbReference type="EMBL" id="AK150402">
    <property type="protein sequence ID" value="BAE29528.1"/>
    <property type="molecule type" value="mRNA"/>
</dbReference>
<dbReference type="EMBL" id="CT010232">
    <property type="protein sequence ID" value="CAJ18440.1"/>
    <property type="molecule type" value="mRNA"/>
</dbReference>
<dbReference type="EMBL" id="BC007146">
    <property type="protein sequence ID" value="AAH07146.1"/>
    <property type="molecule type" value="mRNA"/>
</dbReference>
<dbReference type="CCDS" id="CCDS39369.1"/>
<dbReference type="RefSeq" id="NP_080117.1">
    <property type="nucleotide sequence ID" value="NM_025841.4"/>
</dbReference>
<dbReference type="SMR" id="Q9CQM2"/>
<dbReference type="FunCoup" id="Q9CQM2">
    <property type="interactions" value="1477"/>
</dbReference>
<dbReference type="STRING" id="10090.ENSMUSP00000106359"/>
<dbReference type="PhosphoSitePlus" id="Q9CQM2"/>
<dbReference type="SwissPalm" id="Q9CQM2"/>
<dbReference type="jPOST" id="Q9CQM2"/>
<dbReference type="PaxDb" id="10090-ENSMUSP00000106359"/>
<dbReference type="PeptideAtlas" id="Q9CQM2"/>
<dbReference type="ProteomicsDB" id="275673"/>
<dbReference type="Pumba" id="Q9CQM2"/>
<dbReference type="Antibodypedia" id="11644">
    <property type="antibodies" value="171 antibodies from 26 providers"/>
</dbReference>
<dbReference type="DNASU" id="66913"/>
<dbReference type="Ensembl" id="ENSMUST00000110731.4">
    <property type="protein sequence ID" value="ENSMUSP00000106359.3"/>
    <property type="gene ID" value="ENSMUSG00000079111.4"/>
</dbReference>
<dbReference type="GeneID" id="66913"/>
<dbReference type="KEGG" id="mmu:66913"/>
<dbReference type="UCSC" id="uc009akh.2">
    <property type="organism name" value="mouse"/>
</dbReference>
<dbReference type="AGR" id="MGI:1914163"/>
<dbReference type="CTD" id="11014"/>
<dbReference type="MGI" id="MGI:1914163">
    <property type="gene designation" value="Kdelr2"/>
</dbReference>
<dbReference type="VEuPathDB" id="HostDB:ENSMUSG00000079111"/>
<dbReference type="eggNOG" id="KOG3106">
    <property type="taxonomic scope" value="Eukaryota"/>
</dbReference>
<dbReference type="GeneTree" id="ENSGT00390000004010"/>
<dbReference type="HOGENOM" id="CLU_057784_0_0_1"/>
<dbReference type="InParanoid" id="Q9CQM2"/>
<dbReference type="OMA" id="WKSRSCE"/>
<dbReference type="OrthoDB" id="7694678at2759"/>
<dbReference type="PhylomeDB" id="Q9CQM2"/>
<dbReference type="TreeFam" id="TF314792"/>
<dbReference type="Reactome" id="R-MMU-6807878">
    <property type="pathway name" value="COPI-mediated anterograde transport"/>
</dbReference>
<dbReference type="Reactome" id="R-MMU-6811434">
    <property type="pathway name" value="COPI-dependent Golgi-to-ER retrograde traffic"/>
</dbReference>
<dbReference type="BioGRID-ORCS" id="66913">
    <property type="hits" value="16 hits in 76 CRISPR screens"/>
</dbReference>
<dbReference type="ChiTaRS" id="Kdelr2">
    <property type="organism name" value="mouse"/>
</dbReference>
<dbReference type="PRO" id="PR:Q9CQM2"/>
<dbReference type="Proteomes" id="UP000000589">
    <property type="component" value="Chromosome 5"/>
</dbReference>
<dbReference type="RNAct" id="Q9CQM2">
    <property type="molecule type" value="protein"/>
</dbReference>
<dbReference type="Bgee" id="ENSMUSG00000079111">
    <property type="expression patterns" value="Expressed in ascending aorta and 285 other cell types or tissues"/>
</dbReference>
<dbReference type="GO" id="GO:0005801">
    <property type="term" value="C:cis-Golgi network"/>
    <property type="evidence" value="ECO:0000266"/>
    <property type="project" value="MGI"/>
</dbReference>
<dbReference type="GO" id="GO:0030663">
    <property type="term" value="C:COPI-coated vesicle membrane"/>
    <property type="evidence" value="ECO:0007669"/>
    <property type="project" value="UniProtKB-SubCell"/>
</dbReference>
<dbReference type="GO" id="GO:0005783">
    <property type="term" value="C:endoplasmic reticulum"/>
    <property type="evidence" value="ECO:0000266"/>
    <property type="project" value="MGI"/>
</dbReference>
<dbReference type="GO" id="GO:0005789">
    <property type="term" value="C:endoplasmic reticulum membrane"/>
    <property type="evidence" value="ECO:0000250"/>
    <property type="project" value="UniProtKB"/>
</dbReference>
<dbReference type="GO" id="GO:0000139">
    <property type="term" value="C:Golgi membrane"/>
    <property type="evidence" value="ECO:0000250"/>
    <property type="project" value="UniProtKB"/>
</dbReference>
<dbReference type="GO" id="GO:0016020">
    <property type="term" value="C:membrane"/>
    <property type="evidence" value="ECO:0000250"/>
    <property type="project" value="UniProtKB"/>
</dbReference>
<dbReference type="GO" id="GO:0005046">
    <property type="term" value="F:KDEL sequence binding"/>
    <property type="evidence" value="ECO:0000250"/>
    <property type="project" value="UniProtKB"/>
</dbReference>
<dbReference type="GO" id="GO:0035437">
    <property type="term" value="P:maintenance of protein localization in endoplasmic reticulum"/>
    <property type="evidence" value="ECO:0000250"/>
    <property type="project" value="UniProtKB"/>
</dbReference>
<dbReference type="GO" id="GO:0006621">
    <property type="term" value="P:protein retention in ER lumen"/>
    <property type="evidence" value="ECO:0007669"/>
    <property type="project" value="InterPro"/>
</dbReference>
<dbReference type="GO" id="GO:0015031">
    <property type="term" value="P:protein transport"/>
    <property type="evidence" value="ECO:0007669"/>
    <property type="project" value="UniProtKB-KW"/>
</dbReference>
<dbReference type="GO" id="GO:0006890">
    <property type="term" value="P:retrograde vesicle-mediated transport, Golgi to endoplasmic reticulum"/>
    <property type="evidence" value="ECO:0000250"/>
    <property type="project" value="UniProtKB"/>
</dbReference>
<dbReference type="InterPro" id="IPR000133">
    <property type="entry name" value="ER_ret_rcpt"/>
</dbReference>
<dbReference type="PANTHER" id="PTHR10585">
    <property type="entry name" value="ER LUMEN PROTEIN RETAINING RECEPTOR"/>
    <property type="match status" value="1"/>
</dbReference>
<dbReference type="Pfam" id="PF00810">
    <property type="entry name" value="ER_lumen_recept"/>
    <property type="match status" value="1"/>
</dbReference>
<dbReference type="PRINTS" id="PR00660">
    <property type="entry name" value="ERLUMENR"/>
</dbReference>
<dbReference type="PROSITE" id="PS00951">
    <property type="entry name" value="ER_LUMEN_RECEPTOR_1"/>
    <property type="match status" value="1"/>
</dbReference>
<dbReference type="PROSITE" id="PS00952">
    <property type="entry name" value="ER_LUMEN_RECEPTOR_2"/>
    <property type="match status" value="1"/>
</dbReference>
<organism>
    <name type="scientific">Mus musculus</name>
    <name type="common">Mouse</name>
    <dbReference type="NCBI Taxonomy" id="10090"/>
    <lineage>
        <taxon>Eukaryota</taxon>
        <taxon>Metazoa</taxon>
        <taxon>Chordata</taxon>
        <taxon>Craniata</taxon>
        <taxon>Vertebrata</taxon>
        <taxon>Euteleostomi</taxon>
        <taxon>Mammalia</taxon>
        <taxon>Eutheria</taxon>
        <taxon>Euarchontoglires</taxon>
        <taxon>Glires</taxon>
        <taxon>Rodentia</taxon>
        <taxon>Myomorpha</taxon>
        <taxon>Muroidea</taxon>
        <taxon>Muridae</taxon>
        <taxon>Murinae</taxon>
        <taxon>Mus</taxon>
        <taxon>Mus</taxon>
    </lineage>
</organism>
<sequence length="212" mass="24454">MNIFRLTGDLSHLAAIVILLLKIWKTRSCAGISGKSQLLFALVFTTRYLDLFTSFISLYNTSMKLIYIACSYATVYLIYMKFKATYDGNHDTFRVEFLVVPVGGLSFLVNHDFSPLEILWTFSIYLESVAILPQLFMISKTGEAETITTHYLFFLGLYRALYLVNWIWRFYFEGFFDLIAVVAGVVQTILYCDFFYLYITKVLKGKKLSLPA</sequence>
<reference key="1">
    <citation type="submission" date="2000-05" db="EMBL/GenBank/DDBJ databases">
        <title>Full-length sequencing of some human and murine muscular transcripts (Telethon Italy project B41).</title>
        <authorList>
            <person name="Ievolella C."/>
            <person name="Negrisolo E."/>
            <person name="Lanfranchi G."/>
            <person name="Valle G."/>
        </authorList>
    </citation>
    <scope>NUCLEOTIDE SEQUENCE [MRNA]</scope>
    <source>
        <tissue>Skeletal muscle</tissue>
    </source>
</reference>
<reference key="2">
    <citation type="journal article" date="2005" name="Science">
        <title>The transcriptional landscape of the mammalian genome.</title>
        <authorList>
            <person name="Carninci P."/>
            <person name="Kasukawa T."/>
            <person name="Katayama S."/>
            <person name="Gough J."/>
            <person name="Frith M.C."/>
            <person name="Maeda N."/>
            <person name="Oyama R."/>
            <person name="Ravasi T."/>
            <person name="Lenhard B."/>
            <person name="Wells C."/>
            <person name="Kodzius R."/>
            <person name="Shimokawa K."/>
            <person name="Bajic V.B."/>
            <person name="Brenner S.E."/>
            <person name="Batalov S."/>
            <person name="Forrest A.R."/>
            <person name="Zavolan M."/>
            <person name="Davis M.J."/>
            <person name="Wilming L.G."/>
            <person name="Aidinis V."/>
            <person name="Allen J.E."/>
            <person name="Ambesi-Impiombato A."/>
            <person name="Apweiler R."/>
            <person name="Aturaliya R.N."/>
            <person name="Bailey T.L."/>
            <person name="Bansal M."/>
            <person name="Baxter L."/>
            <person name="Beisel K.W."/>
            <person name="Bersano T."/>
            <person name="Bono H."/>
            <person name="Chalk A.M."/>
            <person name="Chiu K.P."/>
            <person name="Choudhary V."/>
            <person name="Christoffels A."/>
            <person name="Clutterbuck D.R."/>
            <person name="Crowe M.L."/>
            <person name="Dalla E."/>
            <person name="Dalrymple B.P."/>
            <person name="de Bono B."/>
            <person name="Della Gatta G."/>
            <person name="di Bernardo D."/>
            <person name="Down T."/>
            <person name="Engstrom P."/>
            <person name="Fagiolini M."/>
            <person name="Faulkner G."/>
            <person name="Fletcher C.F."/>
            <person name="Fukushima T."/>
            <person name="Furuno M."/>
            <person name="Futaki S."/>
            <person name="Gariboldi M."/>
            <person name="Georgii-Hemming P."/>
            <person name="Gingeras T.R."/>
            <person name="Gojobori T."/>
            <person name="Green R.E."/>
            <person name="Gustincich S."/>
            <person name="Harbers M."/>
            <person name="Hayashi Y."/>
            <person name="Hensch T.K."/>
            <person name="Hirokawa N."/>
            <person name="Hill D."/>
            <person name="Huminiecki L."/>
            <person name="Iacono M."/>
            <person name="Ikeo K."/>
            <person name="Iwama A."/>
            <person name="Ishikawa T."/>
            <person name="Jakt M."/>
            <person name="Kanapin A."/>
            <person name="Katoh M."/>
            <person name="Kawasawa Y."/>
            <person name="Kelso J."/>
            <person name="Kitamura H."/>
            <person name="Kitano H."/>
            <person name="Kollias G."/>
            <person name="Krishnan S.P."/>
            <person name="Kruger A."/>
            <person name="Kummerfeld S.K."/>
            <person name="Kurochkin I.V."/>
            <person name="Lareau L.F."/>
            <person name="Lazarevic D."/>
            <person name="Lipovich L."/>
            <person name="Liu J."/>
            <person name="Liuni S."/>
            <person name="McWilliam S."/>
            <person name="Madan Babu M."/>
            <person name="Madera M."/>
            <person name="Marchionni L."/>
            <person name="Matsuda H."/>
            <person name="Matsuzawa S."/>
            <person name="Miki H."/>
            <person name="Mignone F."/>
            <person name="Miyake S."/>
            <person name="Morris K."/>
            <person name="Mottagui-Tabar S."/>
            <person name="Mulder N."/>
            <person name="Nakano N."/>
            <person name="Nakauchi H."/>
            <person name="Ng P."/>
            <person name="Nilsson R."/>
            <person name="Nishiguchi S."/>
            <person name="Nishikawa S."/>
            <person name="Nori F."/>
            <person name="Ohara O."/>
            <person name="Okazaki Y."/>
            <person name="Orlando V."/>
            <person name="Pang K.C."/>
            <person name="Pavan W.J."/>
            <person name="Pavesi G."/>
            <person name="Pesole G."/>
            <person name="Petrovsky N."/>
            <person name="Piazza S."/>
            <person name="Reed J."/>
            <person name="Reid J.F."/>
            <person name="Ring B.Z."/>
            <person name="Ringwald M."/>
            <person name="Rost B."/>
            <person name="Ruan Y."/>
            <person name="Salzberg S.L."/>
            <person name="Sandelin A."/>
            <person name="Schneider C."/>
            <person name="Schoenbach C."/>
            <person name="Sekiguchi K."/>
            <person name="Semple C.A."/>
            <person name="Seno S."/>
            <person name="Sessa L."/>
            <person name="Sheng Y."/>
            <person name="Shibata Y."/>
            <person name="Shimada H."/>
            <person name="Shimada K."/>
            <person name="Silva D."/>
            <person name="Sinclair B."/>
            <person name="Sperling S."/>
            <person name="Stupka E."/>
            <person name="Sugiura K."/>
            <person name="Sultana R."/>
            <person name="Takenaka Y."/>
            <person name="Taki K."/>
            <person name="Tammoja K."/>
            <person name="Tan S.L."/>
            <person name="Tang S."/>
            <person name="Taylor M.S."/>
            <person name="Tegner J."/>
            <person name="Teichmann S.A."/>
            <person name="Ueda H.R."/>
            <person name="van Nimwegen E."/>
            <person name="Verardo R."/>
            <person name="Wei C.L."/>
            <person name="Yagi K."/>
            <person name="Yamanishi H."/>
            <person name="Zabarovsky E."/>
            <person name="Zhu S."/>
            <person name="Zimmer A."/>
            <person name="Hide W."/>
            <person name="Bult C."/>
            <person name="Grimmond S.M."/>
            <person name="Teasdale R.D."/>
            <person name="Liu E.T."/>
            <person name="Brusic V."/>
            <person name="Quackenbush J."/>
            <person name="Wahlestedt C."/>
            <person name="Mattick J.S."/>
            <person name="Hume D.A."/>
            <person name="Kai C."/>
            <person name="Sasaki D."/>
            <person name="Tomaru Y."/>
            <person name="Fukuda S."/>
            <person name="Kanamori-Katayama M."/>
            <person name="Suzuki M."/>
            <person name="Aoki J."/>
            <person name="Arakawa T."/>
            <person name="Iida J."/>
            <person name="Imamura K."/>
            <person name="Itoh M."/>
            <person name="Kato T."/>
            <person name="Kawaji H."/>
            <person name="Kawagashira N."/>
            <person name="Kawashima T."/>
            <person name="Kojima M."/>
            <person name="Kondo S."/>
            <person name="Konno H."/>
            <person name="Nakano K."/>
            <person name="Ninomiya N."/>
            <person name="Nishio T."/>
            <person name="Okada M."/>
            <person name="Plessy C."/>
            <person name="Shibata K."/>
            <person name="Shiraki T."/>
            <person name="Suzuki S."/>
            <person name="Tagami M."/>
            <person name="Waki K."/>
            <person name="Watahiki A."/>
            <person name="Okamura-Oho Y."/>
            <person name="Suzuki H."/>
            <person name="Kawai J."/>
            <person name="Hayashizaki Y."/>
        </authorList>
    </citation>
    <scope>NUCLEOTIDE SEQUENCE [LARGE SCALE MRNA]</scope>
    <source>
        <strain>C57BL/6J</strain>
        <tissue>Bone marrow</tissue>
        <tissue>Pancreas</tissue>
    </source>
</reference>
<reference key="3">
    <citation type="submission" date="2005-07" db="EMBL/GenBank/DDBJ databases">
        <title>Cloning of mouse full open reading frames in Gateway(R) system entry vector (pDONR201).</title>
        <authorList>
            <person name="Ebert L."/>
            <person name="Muenstermann E."/>
            <person name="Schatten R."/>
            <person name="Henze S."/>
            <person name="Bohn E."/>
            <person name="Mollenhauer J."/>
            <person name="Wiemann S."/>
            <person name="Schick M."/>
            <person name="Korn B."/>
        </authorList>
    </citation>
    <scope>NUCLEOTIDE SEQUENCE [LARGE SCALE MRNA]</scope>
</reference>
<reference key="4">
    <citation type="journal article" date="2004" name="Genome Res.">
        <title>The status, quality, and expansion of the NIH full-length cDNA project: the Mammalian Gene Collection (MGC).</title>
        <authorList>
            <consortium name="The MGC Project Team"/>
        </authorList>
    </citation>
    <scope>NUCLEOTIDE SEQUENCE [LARGE SCALE MRNA]</scope>
    <source>
        <strain>FVB/N</strain>
        <tissue>Mammary tumor</tissue>
    </source>
</reference>
<reference key="5">
    <citation type="journal article" date="2010" name="Cell">
        <title>A tissue-specific atlas of mouse protein phosphorylation and expression.</title>
        <authorList>
            <person name="Huttlin E.L."/>
            <person name="Jedrychowski M.P."/>
            <person name="Elias J.E."/>
            <person name="Goswami T."/>
            <person name="Rad R."/>
            <person name="Beausoleil S.A."/>
            <person name="Villen J."/>
            <person name="Haas W."/>
            <person name="Sowa M.E."/>
            <person name="Gygi S.P."/>
        </authorList>
    </citation>
    <scope>IDENTIFICATION BY MASS SPECTROMETRY [LARGE SCALE ANALYSIS]</scope>
    <source>
        <tissue>Kidney</tissue>
        <tissue>Liver</tissue>
        <tissue>Lung</tissue>
        <tissue>Pancreas</tissue>
        <tissue>Testis</tissue>
    </source>
</reference>
<protein>
    <recommendedName>
        <fullName>ER lumen protein-retaining receptor 2</fullName>
    </recommendedName>
    <alternativeName>
        <fullName>KDEL endoplasmic reticulum protein retention receptor 2</fullName>
        <shortName>KDEL receptor 2</shortName>
    </alternativeName>
</protein>
<feature type="chain" id="PRO_0000194156" description="ER lumen protein-retaining receptor 2">
    <location>
        <begin position="1"/>
        <end position="212"/>
    </location>
</feature>
<feature type="topological domain" description="Lumenal" evidence="4">
    <location>
        <begin position="1"/>
        <end position="4"/>
    </location>
</feature>
<feature type="transmembrane region" description="Helical" evidence="3">
    <location>
        <begin position="5"/>
        <end position="24"/>
    </location>
</feature>
<feature type="topological domain" description="Cytoplasmic" evidence="4">
    <location>
        <begin position="25"/>
        <end position="32"/>
    </location>
</feature>
<feature type="transmembrane region" description="Helical" evidence="3">
    <location>
        <begin position="33"/>
        <end position="52"/>
    </location>
</feature>
<feature type="topological domain" description="Lumenal" evidence="4">
    <location>
        <begin position="53"/>
        <end position="58"/>
    </location>
</feature>
<feature type="transmembrane region" description="Helical" evidence="3">
    <location>
        <begin position="59"/>
        <end position="79"/>
    </location>
</feature>
<feature type="topological domain" description="Cytoplasmic" evidence="4">
    <location>
        <begin position="80"/>
        <end position="92"/>
    </location>
</feature>
<feature type="transmembrane region" description="Helical" evidence="3">
    <location>
        <begin position="93"/>
        <end position="110"/>
    </location>
</feature>
<feature type="topological domain" description="Lumenal" evidence="4">
    <location>
        <begin position="111"/>
        <end position="116"/>
    </location>
</feature>
<feature type="transmembrane region" description="Helical" evidence="3">
    <location>
        <begin position="117"/>
        <end position="135"/>
    </location>
</feature>
<feature type="topological domain" description="Cytoplasmic" evidence="4">
    <location>
        <begin position="136"/>
        <end position="149"/>
    </location>
</feature>
<feature type="transmembrane region" description="Helical" evidence="3">
    <location>
        <begin position="150"/>
        <end position="168"/>
    </location>
</feature>
<feature type="topological domain" description="Lumenal" evidence="4">
    <location>
        <begin position="169"/>
        <end position="178"/>
    </location>
</feature>
<feature type="transmembrane region" description="Helical" evidence="3">
    <location>
        <begin position="179"/>
        <end position="199"/>
    </location>
</feature>
<feature type="topological domain" description="Cytoplasmic" evidence="4">
    <location>
        <begin position="200"/>
        <end position="212"/>
    </location>
</feature>
<feature type="region of interest" description="Interaction with the K-D-E-L motif on target proteins" evidence="3">
    <location>
        <begin position="47"/>
        <end position="48"/>
    </location>
</feature>
<feature type="region of interest" description="Interaction with the K-D-E-L motif on target proteins" evidence="3">
    <location>
        <begin position="159"/>
        <end position="169"/>
    </location>
</feature>
<feature type="region of interest" description="Important for recycling of cargo proteins with the sequence motif K-D-E-L from the Golgi to the endoplasmic reticulum" evidence="1">
    <location>
        <begin position="204"/>
        <end position="207"/>
    </location>
</feature>
<feature type="site" description="Interaction with the K-D-E-L motif on target proteins" evidence="3">
    <location>
        <position position="5"/>
    </location>
</feature>
<feature type="site" description="Interaction with the K-D-E-L motif on target proteins" evidence="3">
    <location>
        <position position="54"/>
    </location>
</feature>
<feature type="site" description="Interaction with the K-D-E-L motif on target proteins" evidence="3">
    <location>
        <position position="117"/>
    </location>
</feature>
<feature type="site" description="Important for recycling of cargo proteins with the sequence motif K-D-E-L from the Golgi to the endoplasmic reticulum" evidence="1">
    <location>
        <position position="193"/>
    </location>
</feature>
<keyword id="KW-0968">Cytoplasmic vesicle</keyword>
<keyword id="KW-0256">Endoplasmic reticulum</keyword>
<keyword id="KW-0931">ER-Golgi transport</keyword>
<keyword id="KW-0333">Golgi apparatus</keyword>
<keyword id="KW-0472">Membrane</keyword>
<keyword id="KW-0653">Protein transport</keyword>
<keyword id="KW-0675">Receptor</keyword>
<keyword id="KW-1185">Reference proteome</keyword>
<keyword id="KW-0812">Transmembrane</keyword>
<keyword id="KW-1133">Transmembrane helix</keyword>
<keyword id="KW-0813">Transport</keyword>
<accession>Q9CQM2</accession>
<accession>Q4FK20</accession>
<name>ERD22_MOUSE</name>
<proteinExistence type="evidence at protein level"/>
<comment type="function">
    <text evidence="2 3">Membrane receptor that binds the K-D-E-L sequence motif in the C-terminal part of endoplasmic reticulum resident proteins and maintains their localization in that compartment by participating to their vesicle-mediated recycling back from the Golgi (By similarity). Binding is pH dependent, and is optimal at pH 5-5.4 (By similarity).</text>
</comment>
<comment type="subcellular location">
    <subcellularLocation>
        <location evidence="2">Endoplasmic reticulum membrane</location>
        <topology evidence="3">Multi-pass membrane protein</topology>
    </subcellularLocation>
    <subcellularLocation>
        <location evidence="2">Golgi apparatus membrane</location>
        <topology evidence="3">Multi-pass membrane protein</topology>
    </subcellularLocation>
    <subcellularLocation>
        <location evidence="2">Cytoplasmic vesicle</location>
        <location evidence="2">COPI-coated vesicle membrane</location>
        <topology evidence="3">Multi-pass membrane protein</topology>
    </subcellularLocation>
    <text evidence="2">Localized in the Golgi in the absence of bound proteins with the sequence motif K-D-E-L. Trafficks back to the endoplasmic reticulum together with cargo proteins containing the sequence motif K-D-E-L.</text>
</comment>
<comment type="domain">
    <text evidence="1 3">Binds the C-terminal sequence motif K-D-E-L in a hydrophilic cavity between the transmembrane domains. This triggers a conformation change that exposes a Lys-rich patch on the cytosolic surface of the protein (By similarity). This patch mediates recycling from the Golgi to the endoplasmic reticulum, probably via COPI vesicles (By similarity).</text>
</comment>
<comment type="similarity">
    <text evidence="4">Belongs to the ERD2 family.</text>
</comment>
<evidence type="ECO:0000250" key="1">
    <source>
        <dbReference type="UniProtKB" id="P24390"/>
    </source>
</evidence>
<evidence type="ECO:0000250" key="2">
    <source>
        <dbReference type="UniProtKB" id="P33947"/>
    </source>
</evidence>
<evidence type="ECO:0000250" key="3">
    <source>
        <dbReference type="UniProtKB" id="Q5ZKX9"/>
    </source>
</evidence>
<evidence type="ECO:0000305" key="4"/>